<proteinExistence type="evidence at protein level"/>
<evidence type="ECO:0000250" key="1"/>
<evidence type="ECO:0000269" key="2">
    <source>
    </source>
</evidence>
<evidence type="ECO:0000305" key="3"/>
<evidence type="ECO:0007744" key="4">
    <source>
    </source>
</evidence>
<comment type="function">
    <text evidence="1">Catalyzes the reversible transamination between alanine and 2-oxoglutarate to form pyruvate and glutamate.</text>
</comment>
<comment type="catalytic activity">
    <reaction>
        <text>L-alanine + 2-oxoglutarate = pyruvate + L-glutamate</text>
        <dbReference type="Rhea" id="RHEA:19453"/>
        <dbReference type="ChEBI" id="CHEBI:15361"/>
        <dbReference type="ChEBI" id="CHEBI:16810"/>
        <dbReference type="ChEBI" id="CHEBI:29985"/>
        <dbReference type="ChEBI" id="CHEBI:57972"/>
        <dbReference type="EC" id="2.6.1.2"/>
    </reaction>
</comment>
<comment type="cofactor">
    <cofactor evidence="1">
        <name>pyridoxal 5'-phosphate</name>
        <dbReference type="ChEBI" id="CHEBI:597326"/>
    </cofactor>
</comment>
<comment type="pathway">
    <text>Amino-acid degradation; L-alanine degradation via transaminase pathway; pyruvate from L-alanine: step 1/1.</text>
</comment>
<comment type="subunit">
    <text evidence="1">Homodimer.</text>
</comment>
<comment type="tissue specificity">
    <text evidence="2">Specifically induced in fatty liver. Highly expressed in muscle, liver and white adipose tissue. Moderately expressed in brain and kidney and expressed at low levels in the heart.</text>
</comment>
<comment type="miscellaneous">
    <text>May be responsible for increased ALT activity in hepatic steatosis.</text>
</comment>
<comment type="similarity">
    <text evidence="3">Belongs to the class-I pyridoxal-phosphate-dependent aminotransferase family. Alanine aminotransferase subfamily.</text>
</comment>
<reference key="1">
    <citation type="journal article" date="2004" name="Hepatology">
        <title>Murine alanine aminotransferase: cDNA cloning, functional expression, and differential gene regulation in mouse fatty liver.</title>
        <authorList>
            <person name="Jadhao S.B."/>
            <person name="Yang R.-Z."/>
            <person name="Lin Q."/>
            <person name="Hu H."/>
            <person name="Anania F.A."/>
            <person name="Shuldiner A.R."/>
            <person name="Gong D.-W."/>
        </authorList>
    </citation>
    <scope>NUCLEOTIDE SEQUENCE [MRNA]</scope>
    <scope>TISSUE SPECIFICITY</scope>
</reference>
<reference key="2">
    <citation type="journal article" date="2004" name="Hepatology">
        <authorList>
            <person name="Jadhao S.B."/>
            <person name="Yang R.-Z."/>
            <person name="Lin Q."/>
            <person name="Hu H."/>
            <person name="Anania F.A."/>
            <person name="Shuldiner A.R."/>
            <person name="Gong D.-W."/>
        </authorList>
    </citation>
    <scope>ERRATUM OF PUBMED:15122758</scope>
</reference>
<reference key="3">
    <citation type="journal article" date="2005" name="Science">
        <title>The transcriptional landscape of the mammalian genome.</title>
        <authorList>
            <person name="Carninci P."/>
            <person name="Kasukawa T."/>
            <person name="Katayama S."/>
            <person name="Gough J."/>
            <person name="Frith M.C."/>
            <person name="Maeda N."/>
            <person name="Oyama R."/>
            <person name="Ravasi T."/>
            <person name="Lenhard B."/>
            <person name="Wells C."/>
            <person name="Kodzius R."/>
            <person name="Shimokawa K."/>
            <person name="Bajic V.B."/>
            <person name="Brenner S.E."/>
            <person name="Batalov S."/>
            <person name="Forrest A.R."/>
            <person name="Zavolan M."/>
            <person name="Davis M.J."/>
            <person name="Wilming L.G."/>
            <person name="Aidinis V."/>
            <person name="Allen J.E."/>
            <person name="Ambesi-Impiombato A."/>
            <person name="Apweiler R."/>
            <person name="Aturaliya R.N."/>
            <person name="Bailey T.L."/>
            <person name="Bansal M."/>
            <person name="Baxter L."/>
            <person name="Beisel K.W."/>
            <person name="Bersano T."/>
            <person name="Bono H."/>
            <person name="Chalk A.M."/>
            <person name="Chiu K.P."/>
            <person name="Choudhary V."/>
            <person name="Christoffels A."/>
            <person name="Clutterbuck D.R."/>
            <person name="Crowe M.L."/>
            <person name="Dalla E."/>
            <person name="Dalrymple B.P."/>
            <person name="de Bono B."/>
            <person name="Della Gatta G."/>
            <person name="di Bernardo D."/>
            <person name="Down T."/>
            <person name="Engstrom P."/>
            <person name="Fagiolini M."/>
            <person name="Faulkner G."/>
            <person name="Fletcher C.F."/>
            <person name="Fukushima T."/>
            <person name="Furuno M."/>
            <person name="Futaki S."/>
            <person name="Gariboldi M."/>
            <person name="Georgii-Hemming P."/>
            <person name="Gingeras T.R."/>
            <person name="Gojobori T."/>
            <person name="Green R.E."/>
            <person name="Gustincich S."/>
            <person name="Harbers M."/>
            <person name="Hayashi Y."/>
            <person name="Hensch T.K."/>
            <person name="Hirokawa N."/>
            <person name="Hill D."/>
            <person name="Huminiecki L."/>
            <person name="Iacono M."/>
            <person name="Ikeo K."/>
            <person name="Iwama A."/>
            <person name="Ishikawa T."/>
            <person name="Jakt M."/>
            <person name="Kanapin A."/>
            <person name="Katoh M."/>
            <person name="Kawasawa Y."/>
            <person name="Kelso J."/>
            <person name="Kitamura H."/>
            <person name="Kitano H."/>
            <person name="Kollias G."/>
            <person name="Krishnan S.P."/>
            <person name="Kruger A."/>
            <person name="Kummerfeld S.K."/>
            <person name="Kurochkin I.V."/>
            <person name="Lareau L.F."/>
            <person name="Lazarevic D."/>
            <person name="Lipovich L."/>
            <person name="Liu J."/>
            <person name="Liuni S."/>
            <person name="McWilliam S."/>
            <person name="Madan Babu M."/>
            <person name="Madera M."/>
            <person name="Marchionni L."/>
            <person name="Matsuda H."/>
            <person name="Matsuzawa S."/>
            <person name="Miki H."/>
            <person name="Mignone F."/>
            <person name="Miyake S."/>
            <person name="Morris K."/>
            <person name="Mottagui-Tabar S."/>
            <person name="Mulder N."/>
            <person name="Nakano N."/>
            <person name="Nakauchi H."/>
            <person name="Ng P."/>
            <person name="Nilsson R."/>
            <person name="Nishiguchi S."/>
            <person name="Nishikawa S."/>
            <person name="Nori F."/>
            <person name="Ohara O."/>
            <person name="Okazaki Y."/>
            <person name="Orlando V."/>
            <person name="Pang K.C."/>
            <person name="Pavan W.J."/>
            <person name="Pavesi G."/>
            <person name="Pesole G."/>
            <person name="Petrovsky N."/>
            <person name="Piazza S."/>
            <person name="Reed J."/>
            <person name="Reid J.F."/>
            <person name="Ring B.Z."/>
            <person name="Ringwald M."/>
            <person name="Rost B."/>
            <person name="Ruan Y."/>
            <person name="Salzberg S.L."/>
            <person name="Sandelin A."/>
            <person name="Schneider C."/>
            <person name="Schoenbach C."/>
            <person name="Sekiguchi K."/>
            <person name="Semple C.A."/>
            <person name="Seno S."/>
            <person name="Sessa L."/>
            <person name="Sheng Y."/>
            <person name="Shibata Y."/>
            <person name="Shimada H."/>
            <person name="Shimada K."/>
            <person name="Silva D."/>
            <person name="Sinclair B."/>
            <person name="Sperling S."/>
            <person name="Stupka E."/>
            <person name="Sugiura K."/>
            <person name="Sultana R."/>
            <person name="Takenaka Y."/>
            <person name="Taki K."/>
            <person name="Tammoja K."/>
            <person name="Tan S.L."/>
            <person name="Tang S."/>
            <person name="Taylor M.S."/>
            <person name="Tegner J."/>
            <person name="Teichmann S.A."/>
            <person name="Ueda H.R."/>
            <person name="van Nimwegen E."/>
            <person name="Verardo R."/>
            <person name="Wei C.L."/>
            <person name="Yagi K."/>
            <person name="Yamanishi H."/>
            <person name="Zabarovsky E."/>
            <person name="Zhu S."/>
            <person name="Zimmer A."/>
            <person name="Hide W."/>
            <person name="Bult C."/>
            <person name="Grimmond S.M."/>
            <person name="Teasdale R.D."/>
            <person name="Liu E.T."/>
            <person name="Brusic V."/>
            <person name="Quackenbush J."/>
            <person name="Wahlestedt C."/>
            <person name="Mattick J.S."/>
            <person name="Hume D.A."/>
            <person name="Kai C."/>
            <person name="Sasaki D."/>
            <person name="Tomaru Y."/>
            <person name="Fukuda S."/>
            <person name="Kanamori-Katayama M."/>
            <person name="Suzuki M."/>
            <person name="Aoki J."/>
            <person name="Arakawa T."/>
            <person name="Iida J."/>
            <person name="Imamura K."/>
            <person name="Itoh M."/>
            <person name="Kato T."/>
            <person name="Kawaji H."/>
            <person name="Kawagashira N."/>
            <person name="Kawashima T."/>
            <person name="Kojima M."/>
            <person name="Kondo S."/>
            <person name="Konno H."/>
            <person name="Nakano K."/>
            <person name="Ninomiya N."/>
            <person name="Nishio T."/>
            <person name="Okada M."/>
            <person name="Plessy C."/>
            <person name="Shibata K."/>
            <person name="Shiraki T."/>
            <person name="Suzuki S."/>
            <person name="Tagami M."/>
            <person name="Waki K."/>
            <person name="Watahiki A."/>
            <person name="Okamura-Oho Y."/>
            <person name="Suzuki H."/>
            <person name="Kawai J."/>
            <person name="Hayashizaki Y."/>
        </authorList>
    </citation>
    <scope>NUCLEOTIDE SEQUENCE [LARGE SCALE MRNA]</scope>
    <source>
        <strain>C57BL/6J</strain>
        <tissue>Colon</tissue>
        <tissue>Head</tissue>
        <tissue>Skin</tissue>
        <tissue>Tongue</tissue>
    </source>
</reference>
<reference key="4">
    <citation type="journal article" date="2004" name="Genome Res.">
        <title>The status, quality, and expansion of the NIH full-length cDNA project: the Mammalian Gene Collection (MGC).</title>
        <authorList>
            <consortium name="The MGC Project Team"/>
        </authorList>
    </citation>
    <scope>NUCLEOTIDE SEQUENCE [LARGE SCALE MRNA]</scope>
    <source>
        <strain>Czech II</strain>
        <tissue>Mammary gland</tissue>
    </source>
</reference>
<reference key="5">
    <citation type="journal article" date="2010" name="Cell">
        <title>A tissue-specific atlas of mouse protein phosphorylation and expression.</title>
        <authorList>
            <person name="Huttlin E.L."/>
            <person name="Jedrychowski M.P."/>
            <person name="Elias J.E."/>
            <person name="Goswami T."/>
            <person name="Rad R."/>
            <person name="Beausoleil S.A."/>
            <person name="Villen J."/>
            <person name="Haas W."/>
            <person name="Sowa M.E."/>
            <person name="Gygi S.P."/>
        </authorList>
    </citation>
    <scope>IDENTIFICATION BY MASS SPECTROMETRY [LARGE SCALE ANALYSIS]</scope>
    <source>
        <tissue>Brain</tissue>
        <tissue>Liver</tissue>
        <tissue>Pancreas</tissue>
        <tissue>Testis</tissue>
    </source>
</reference>
<reference key="6">
    <citation type="journal article" date="2013" name="Proc. Natl. Acad. Sci. U.S.A.">
        <title>Label-free quantitative proteomics of the lysine acetylome in mitochondria identifies substrates of SIRT3 in metabolic pathways.</title>
        <authorList>
            <person name="Rardin M.J."/>
            <person name="Newman J.C."/>
            <person name="Held J.M."/>
            <person name="Cusack M.P."/>
            <person name="Sorensen D.J."/>
            <person name="Li B."/>
            <person name="Schilling B."/>
            <person name="Mooney S.D."/>
            <person name="Kahn C.R."/>
            <person name="Verdin E."/>
            <person name="Gibson B.W."/>
        </authorList>
    </citation>
    <scope>ACETYLATION [LARGE SCALE ANALYSIS] AT LYS-414; LYS-504 AND LYS-511</scope>
    <scope>IDENTIFICATION BY MASS SPECTROMETRY [LARGE SCALE ANALYSIS]</scope>
    <source>
        <tissue>Liver</tissue>
    </source>
</reference>
<gene>
    <name type="primary">Gpt2</name>
    <name type="synonym">Aat2</name>
</gene>
<name>ALAT2_MOUSE</name>
<accession>Q8BGT5</accession>
<accession>Q8BVY7</accession>
<accession>Q8K1J3</accession>
<protein>
    <recommendedName>
        <fullName>Alanine aminotransferase 2</fullName>
        <shortName>ALT2</shortName>
        <ecNumber>2.6.1.2</ecNumber>
    </recommendedName>
    <alternativeName>
        <fullName>Glutamate pyruvate transaminase 2</fullName>
        <shortName>GPT 2</shortName>
    </alternativeName>
    <alternativeName>
        <fullName>Glutamic--alanine transaminase 2</fullName>
    </alternativeName>
    <alternativeName>
        <fullName>Glutamic--pyruvic transaminase 2</fullName>
    </alternativeName>
</protein>
<dbReference type="EC" id="2.6.1.2"/>
<dbReference type="EMBL" id="AK033424">
    <property type="protein sequence ID" value="BAC28282.1"/>
    <property type="molecule type" value="mRNA"/>
</dbReference>
<dbReference type="EMBL" id="AK075894">
    <property type="protein sequence ID" value="BAC36035.1"/>
    <property type="molecule type" value="mRNA"/>
</dbReference>
<dbReference type="EMBL" id="AK076250">
    <property type="protein sequence ID" value="BAC36274.1"/>
    <property type="molecule type" value="mRNA"/>
</dbReference>
<dbReference type="EMBL" id="AK082030">
    <property type="protein sequence ID" value="BAC38395.1"/>
    <property type="molecule type" value="mRNA"/>
</dbReference>
<dbReference type="EMBL" id="BC034219">
    <property type="protein sequence ID" value="AAH34219.1"/>
    <property type="molecule type" value="mRNA"/>
</dbReference>
<dbReference type="EMBL" id="BK005128">
    <property type="protein sequence ID" value="DAA05290.1"/>
    <property type="molecule type" value="mRNA"/>
</dbReference>
<dbReference type="CCDS" id="CCDS22499.1"/>
<dbReference type="RefSeq" id="NP_776291.1">
    <property type="nucleotide sequence ID" value="NM_173866.4"/>
</dbReference>
<dbReference type="SMR" id="Q8BGT5"/>
<dbReference type="BioGRID" id="224369">
    <property type="interactions" value="8"/>
</dbReference>
<dbReference type="FunCoup" id="Q8BGT5">
    <property type="interactions" value="1036"/>
</dbReference>
<dbReference type="STRING" id="10090.ENSMUSP00000034136"/>
<dbReference type="GlyGen" id="Q8BGT5">
    <property type="glycosylation" value="1 site, 1 O-linked glycan (1 site)"/>
</dbReference>
<dbReference type="iPTMnet" id="Q8BGT5"/>
<dbReference type="PhosphoSitePlus" id="Q8BGT5"/>
<dbReference type="SwissPalm" id="Q8BGT5"/>
<dbReference type="jPOST" id="Q8BGT5"/>
<dbReference type="PaxDb" id="10090-ENSMUSP00000034136"/>
<dbReference type="PeptideAtlas" id="Q8BGT5"/>
<dbReference type="ProteomicsDB" id="296170"/>
<dbReference type="Pumba" id="Q8BGT5"/>
<dbReference type="Antibodypedia" id="28066">
    <property type="antibodies" value="231 antibodies from 28 providers"/>
</dbReference>
<dbReference type="DNASU" id="108682"/>
<dbReference type="Ensembl" id="ENSMUST00000034136.12">
    <property type="protein sequence ID" value="ENSMUSP00000034136.6"/>
    <property type="gene ID" value="ENSMUSG00000031700.12"/>
</dbReference>
<dbReference type="GeneID" id="108682"/>
<dbReference type="KEGG" id="mmu:108682"/>
<dbReference type="UCSC" id="uc009mpx.1">
    <property type="organism name" value="mouse"/>
</dbReference>
<dbReference type="AGR" id="MGI:1915391"/>
<dbReference type="CTD" id="84706"/>
<dbReference type="MGI" id="MGI:1915391">
    <property type="gene designation" value="Gpt2"/>
</dbReference>
<dbReference type="VEuPathDB" id="HostDB:ENSMUSG00000031700"/>
<dbReference type="eggNOG" id="KOG0258">
    <property type="taxonomic scope" value="Eukaryota"/>
</dbReference>
<dbReference type="GeneTree" id="ENSGT00940000159061"/>
<dbReference type="HOGENOM" id="CLU_014254_3_1_1"/>
<dbReference type="InParanoid" id="Q8BGT5"/>
<dbReference type="OMA" id="FGFECPP"/>
<dbReference type="OrthoDB" id="1732682at2759"/>
<dbReference type="PhylomeDB" id="Q8BGT5"/>
<dbReference type="TreeFam" id="TF300839"/>
<dbReference type="Reactome" id="R-MMU-8964540">
    <property type="pathway name" value="Alanine metabolism"/>
</dbReference>
<dbReference type="UniPathway" id="UPA00528">
    <property type="reaction ID" value="UER00586"/>
</dbReference>
<dbReference type="BioGRID-ORCS" id="108682">
    <property type="hits" value="0 hits in 79 CRISPR screens"/>
</dbReference>
<dbReference type="ChiTaRS" id="Gpt2">
    <property type="organism name" value="mouse"/>
</dbReference>
<dbReference type="PRO" id="PR:Q8BGT5"/>
<dbReference type="Proteomes" id="UP000000589">
    <property type="component" value="Chromosome 8"/>
</dbReference>
<dbReference type="RNAct" id="Q8BGT5">
    <property type="molecule type" value="protein"/>
</dbReference>
<dbReference type="Bgee" id="ENSMUSG00000031700">
    <property type="expression patterns" value="Expressed in lacrimal gland and 251 other cell types or tissues"/>
</dbReference>
<dbReference type="ExpressionAtlas" id="Q8BGT5">
    <property type="expression patterns" value="baseline and differential"/>
</dbReference>
<dbReference type="GO" id="GO:0005739">
    <property type="term" value="C:mitochondrion"/>
    <property type="evidence" value="ECO:0007005"/>
    <property type="project" value="MGI"/>
</dbReference>
<dbReference type="GO" id="GO:0004021">
    <property type="term" value="F:L-alanine:2-oxoglutarate aminotransferase activity"/>
    <property type="evidence" value="ECO:0000250"/>
    <property type="project" value="UniProtKB"/>
</dbReference>
<dbReference type="GO" id="GO:0030170">
    <property type="term" value="F:pyridoxal phosphate binding"/>
    <property type="evidence" value="ECO:0007669"/>
    <property type="project" value="InterPro"/>
</dbReference>
<dbReference type="GO" id="GO:0006103">
    <property type="term" value="P:2-oxoglutarate metabolic process"/>
    <property type="evidence" value="ECO:0000250"/>
    <property type="project" value="UniProtKB"/>
</dbReference>
<dbReference type="GO" id="GO:0009058">
    <property type="term" value="P:biosynthetic process"/>
    <property type="evidence" value="ECO:0007669"/>
    <property type="project" value="InterPro"/>
</dbReference>
<dbReference type="GO" id="GO:0042853">
    <property type="term" value="P:L-alanine catabolic process"/>
    <property type="evidence" value="ECO:0007669"/>
    <property type="project" value="UniProtKB-UniPathway"/>
</dbReference>
<dbReference type="GO" id="GO:0042851">
    <property type="term" value="P:L-alanine metabolic process"/>
    <property type="evidence" value="ECO:0000250"/>
    <property type="project" value="UniProtKB"/>
</dbReference>
<dbReference type="CDD" id="cd00609">
    <property type="entry name" value="AAT_like"/>
    <property type="match status" value="1"/>
</dbReference>
<dbReference type="FunFam" id="1.10.287.1970:FF:000001">
    <property type="entry name" value="Alanine aminotransferase 2"/>
    <property type="match status" value="1"/>
</dbReference>
<dbReference type="FunFam" id="3.40.640.10:FF:000226">
    <property type="entry name" value="Alanine aminotransferase 2"/>
    <property type="match status" value="1"/>
</dbReference>
<dbReference type="FunFam" id="3.90.1150.10:FF:000345">
    <property type="entry name" value="Alanine aminotransferase 2"/>
    <property type="match status" value="1"/>
</dbReference>
<dbReference type="Gene3D" id="1.10.287.1970">
    <property type="match status" value="1"/>
</dbReference>
<dbReference type="Gene3D" id="3.90.1150.10">
    <property type="entry name" value="Aspartate Aminotransferase, domain 1"/>
    <property type="match status" value="1"/>
</dbReference>
<dbReference type="Gene3D" id="3.40.640.10">
    <property type="entry name" value="Type I PLP-dependent aspartate aminotransferase-like (Major domain)"/>
    <property type="match status" value="1"/>
</dbReference>
<dbReference type="InterPro" id="IPR045088">
    <property type="entry name" value="ALAT1/2-like"/>
</dbReference>
<dbReference type="InterPro" id="IPR004839">
    <property type="entry name" value="Aminotransferase_I/II_large"/>
</dbReference>
<dbReference type="InterPro" id="IPR015424">
    <property type="entry name" value="PyrdxlP-dep_Trfase"/>
</dbReference>
<dbReference type="InterPro" id="IPR015421">
    <property type="entry name" value="PyrdxlP-dep_Trfase_major"/>
</dbReference>
<dbReference type="InterPro" id="IPR015422">
    <property type="entry name" value="PyrdxlP-dep_Trfase_small"/>
</dbReference>
<dbReference type="PANTHER" id="PTHR11751">
    <property type="entry name" value="ALANINE AMINOTRANSFERASE"/>
    <property type="match status" value="1"/>
</dbReference>
<dbReference type="PANTHER" id="PTHR11751:SF311">
    <property type="entry name" value="ALANINE AMINOTRANSFERASE 2"/>
    <property type="match status" value="1"/>
</dbReference>
<dbReference type="Pfam" id="PF00155">
    <property type="entry name" value="Aminotran_1_2"/>
    <property type="match status" value="1"/>
</dbReference>
<dbReference type="SUPFAM" id="SSF53383">
    <property type="entry name" value="PLP-dependent transferases"/>
    <property type="match status" value="1"/>
</dbReference>
<feature type="chain" id="PRO_0000247533" description="Alanine aminotransferase 2">
    <location>
        <begin position="1"/>
        <end position="522"/>
    </location>
</feature>
<feature type="modified residue" description="N6-(pyridoxal phosphate)lysine" evidence="1">
    <location>
        <position position="340"/>
    </location>
</feature>
<feature type="modified residue" description="N6-acetyllysine" evidence="4">
    <location>
        <position position="414"/>
    </location>
</feature>
<feature type="modified residue" description="N6-acetyllysine" evidence="4">
    <location>
        <position position="504"/>
    </location>
</feature>
<feature type="modified residue" description="N6-acetyllysine" evidence="4">
    <location>
        <position position="511"/>
    </location>
</feature>
<feature type="sequence conflict" description="In Ref. 4; AAH34219/DAA05290." evidence="3" ref="4">
    <original>R</original>
    <variation>W</variation>
    <location>
        <position position="252"/>
    </location>
</feature>
<feature type="sequence conflict" description="In Ref. 3; BAC36035." evidence="3" ref="3">
    <original>D</original>
    <variation>N</variation>
    <location>
        <position position="421"/>
    </location>
</feature>
<keyword id="KW-0007">Acetylation</keyword>
<keyword id="KW-0032">Aminotransferase</keyword>
<keyword id="KW-0663">Pyridoxal phosphate</keyword>
<keyword id="KW-1185">Reference proteome</keyword>
<keyword id="KW-0808">Transferase</keyword>
<organism>
    <name type="scientific">Mus musculus</name>
    <name type="common">Mouse</name>
    <dbReference type="NCBI Taxonomy" id="10090"/>
    <lineage>
        <taxon>Eukaryota</taxon>
        <taxon>Metazoa</taxon>
        <taxon>Chordata</taxon>
        <taxon>Craniata</taxon>
        <taxon>Vertebrata</taxon>
        <taxon>Euteleostomi</taxon>
        <taxon>Mammalia</taxon>
        <taxon>Eutheria</taxon>
        <taxon>Euarchontoglires</taxon>
        <taxon>Glires</taxon>
        <taxon>Rodentia</taxon>
        <taxon>Myomorpha</taxon>
        <taxon>Muroidea</taxon>
        <taxon>Muridae</taxon>
        <taxon>Murinae</taxon>
        <taxon>Mus</taxon>
        <taxon>Mus</taxon>
    </lineage>
</organism>
<sequence>MQRAAVLVRRGSCPRASGPWGRSHSSAAAEASAALKVRPERSPRDRILTLESMNPQVKAVEYAVRGPIVLKAGEIEMELQRGIKKPFTEVIRANIGDAHAMGQQPITFLRQVMALCTYPNLLNSPSFPEDAKKRARRILQACGGNSLGSYSASQGVNCIREDVAAFITRRDGVPADPDNIYLTTGASDGISTILKLLVSGGGKSRTGVMIPIPQYPLYSAVISELDAVQVNYYLDEENCWALNVDELRRALRQAKDHCDPKVLCIINPGNPTGQVQSRKCIEDVIHFAWEEKLFLLADEVYQDNVYSPDCRFHSFKKVLYQMGHEYSSNVELASFHSTSKGYMGECGYRGGYMEVINLHPEIKGQLVKLLSVRLCPPVSGQAAMDIVVNPPEPGEESFEQFSREKEFVLGNLAKKAKLTEDLFNQVPGIQCNPLQGAMYAFPRILIPAKAVEAAQSHKMAPDMFYCMKLLEETGICVVPGSGFGQREGTYHFRMTILPPVDKLKTVLHKVKDFHLKFLEQYS</sequence>